<sequence length="1043" mass="114471">MEFDRRKAAALAALASPAPDKSPKGGVDAPIAPLLDALNSHPDLFTTSSCSGRVSVLAQPPPPQQADPGGAKTKKKARGGGWVYISHDPADPEALVEVLFGVKEGGGGGDDELVFRFEPMIVAVECRDAAAAAALVAAAVGAGFRESGITSLQKRVMVALRCSIRMEVPLGQTKELVVSPDYIRYLVRIANSKMEANKKRMGGFLDLLQAKISLEASYLESQDPVLQNGAKHGFGNAKRHVLISLSFYPAFISPHGVILTQEEALPTLSGNTTHCLSTAALEITGEPIEKLFLWGQSACALTVGREHHILTFGGFGGPGRHARRNYSLLVNPGSGLLTELKVTGSPSPRMGHTITVVGNDIYVVGGRSGPSEILNDIWVLERSNNRWSKVDCSGDFFRPRHRHAAAAVDRKVYVFGGLSDDGLCSCMNIMDTASIQWNVISPDDKWPCARHSHSLVSYGSKLFLFGGHDGQRALNDFYSFDTTTLKWNKENTNGKAPSPRFSHCMFIYKDYLGILGGCPIRESSQEIALLNLKHKIWFYVSIPSLSQCLCVRSSSVIIDDDLVIVGGGASCYAFGTRFSQPIKIDLHLLESIFKLAYNKEKEMSVQHGSVSNVDLLEGHEENCNPSDNVKVVIDTATLGSSPLVLQLEKKYAKLAKDILKKFGWLDLTRKVRVSQDNIHVLFPVSKTFHALITDKHLKVQPDDSCVFEELLPFSENKLFGASISLQKALEILLLCRGSILKDEVAISRKASKTPQTIMRELVSVLLDKKGLPSQLLEQLPTRWETLGDIIVLPKTCFKDPLWESVRDDLWPLVAKSLGAQRLARQGKITPNGTRDSTLELLVGNDGWLTHHENGICYSLDATKCMFSSGNRSEKLRMGKLDCRDEVVVDLFAGIGYFVLPFLVKANAKLVYACEWNPHALEALQRNVMDNHVADRCIILEGDNRLTAPKGIADRVCLGLLPSSECSWDTAVRALRAEGGMLHIHGNVNDSDESLWLDNVVKSITNIAKTHGLSWNVTVEHVERVKWYGPHIRHLVVDVKCRAT</sequence>
<accession>Q8H4D4</accession>
<accession>B9FXH9</accession>
<name>TYW23_ORYSJ</name>
<protein>
    <recommendedName>
        <fullName>tRNA wybutosine-synthesizing protein 2/3/4</fullName>
    </recommendedName>
    <domain>
        <recommendedName>
            <fullName>tRNA wybutosine-synthesizing protein 3 homolog</fullName>
            <shortName>tRNA-yW-synthesizing protein 3</shortName>
            <ecNumber>2.1.1.282</ecNumber>
        </recommendedName>
        <alternativeName>
            <fullName>tRNA(Phe) 7-((3-amino-3-carboxypropyl)-4-demethylwyosine(37)-N(4))-methyltransferase</fullName>
        </alternativeName>
    </domain>
    <domain>
        <recommendedName>
            <fullName>tRNA wybutosine-synthesizing protein 2 homolog</fullName>
            <shortName>tRNA-yW-synthesizing protein 2</shortName>
            <ecNumber>2.5.1.114</ecNumber>
        </recommendedName>
        <alternativeName>
            <fullName>tRNA(Phe) (4-demethylwyosine(37)-C(7)) aminocarboxypropyltransferase</fullName>
        </alternativeName>
    </domain>
</protein>
<reference key="1">
    <citation type="journal article" date="2005" name="Nature">
        <title>The map-based sequence of the rice genome.</title>
        <authorList>
            <consortium name="International rice genome sequencing project (IRGSP)"/>
        </authorList>
    </citation>
    <scope>NUCLEOTIDE SEQUENCE [LARGE SCALE GENOMIC DNA]</scope>
    <source>
        <strain>cv. Nipponbare</strain>
    </source>
</reference>
<reference key="2">
    <citation type="journal article" date="2008" name="Nucleic Acids Res.">
        <title>The rice annotation project database (RAP-DB): 2008 update.</title>
        <authorList>
            <consortium name="The rice annotation project (RAP)"/>
        </authorList>
    </citation>
    <scope>GENOME REANNOTATION</scope>
    <source>
        <strain>cv. Nipponbare</strain>
    </source>
</reference>
<reference key="3">
    <citation type="journal article" date="2013" name="Rice">
        <title>Improvement of the Oryza sativa Nipponbare reference genome using next generation sequence and optical map data.</title>
        <authorList>
            <person name="Kawahara Y."/>
            <person name="de la Bastide M."/>
            <person name="Hamilton J.P."/>
            <person name="Kanamori H."/>
            <person name="McCombie W.R."/>
            <person name="Ouyang S."/>
            <person name="Schwartz D.C."/>
            <person name="Tanaka T."/>
            <person name="Wu J."/>
            <person name="Zhou S."/>
            <person name="Childs K.L."/>
            <person name="Davidson R.M."/>
            <person name="Lin H."/>
            <person name="Quesada-Ocampo L."/>
            <person name="Vaillancourt B."/>
            <person name="Sakai H."/>
            <person name="Lee S.S."/>
            <person name="Kim J."/>
            <person name="Numa H."/>
            <person name="Itoh T."/>
            <person name="Buell C.R."/>
            <person name="Matsumoto T."/>
        </authorList>
    </citation>
    <scope>GENOME REANNOTATION</scope>
    <source>
        <strain>cv. Nipponbare</strain>
    </source>
</reference>
<reference key="4">
    <citation type="journal article" date="2005" name="PLoS Biol.">
        <title>The genomes of Oryza sativa: a history of duplications.</title>
        <authorList>
            <person name="Yu J."/>
            <person name="Wang J."/>
            <person name="Lin W."/>
            <person name="Li S."/>
            <person name="Li H."/>
            <person name="Zhou J."/>
            <person name="Ni P."/>
            <person name="Dong W."/>
            <person name="Hu S."/>
            <person name="Zeng C."/>
            <person name="Zhang J."/>
            <person name="Zhang Y."/>
            <person name="Li R."/>
            <person name="Xu Z."/>
            <person name="Li S."/>
            <person name="Li X."/>
            <person name="Zheng H."/>
            <person name="Cong L."/>
            <person name="Lin L."/>
            <person name="Yin J."/>
            <person name="Geng J."/>
            <person name="Li G."/>
            <person name="Shi J."/>
            <person name="Liu J."/>
            <person name="Lv H."/>
            <person name="Li J."/>
            <person name="Wang J."/>
            <person name="Deng Y."/>
            <person name="Ran L."/>
            <person name="Shi X."/>
            <person name="Wang X."/>
            <person name="Wu Q."/>
            <person name="Li C."/>
            <person name="Ren X."/>
            <person name="Wang J."/>
            <person name="Wang X."/>
            <person name="Li D."/>
            <person name="Liu D."/>
            <person name="Zhang X."/>
            <person name="Ji Z."/>
            <person name="Zhao W."/>
            <person name="Sun Y."/>
            <person name="Zhang Z."/>
            <person name="Bao J."/>
            <person name="Han Y."/>
            <person name="Dong L."/>
            <person name="Ji J."/>
            <person name="Chen P."/>
            <person name="Wu S."/>
            <person name="Liu J."/>
            <person name="Xiao Y."/>
            <person name="Bu D."/>
            <person name="Tan J."/>
            <person name="Yang L."/>
            <person name="Ye C."/>
            <person name="Zhang J."/>
            <person name="Xu J."/>
            <person name="Zhou Y."/>
            <person name="Yu Y."/>
            <person name="Zhang B."/>
            <person name="Zhuang S."/>
            <person name="Wei H."/>
            <person name="Liu B."/>
            <person name="Lei M."/>
            <person name="Yu H."/>
            <person name="Li Y."/>
            <person name="Xu H."/>
            <person name="Wei S."/>
            <person name="He X."/>
            <person name="Fang L."/>
            <person name="Zhang Z."/>
            <person name="Zhang Y."/>
            <person name="Huang X."/>
            <person name="Su Z."/>
            <person name="Tong W."/>
            <person name="Li J."/>
            <person name="Tong Z."/>
            <person name="Li S."/>
            <person name="Ye J."/>
            <person name="Wang L."/>
            <person name="Fang L."/>
            <person name="Lei T."/>
            <person name="Chen C.-S."/>
            <person name="Chen H.-C."/>
            <person name="Xu Z."/>
            <person name="Li H."/>
            <person name="Huang H."/>
            <person name="Zhang F."/>
            <person name="Xu H."/>
            <person name="Li N."/>
            <person name="Zhao C."/>
            <person name="Li S."/>
            <person name="Dong L."/>
            <person name="Huang Y."/>
            <person name="Li L."/>
            <person name="Xi Y."/>
            <person name="Qi Q."/>
            <person name="Li W."/>
            <person name="Zhang B."/>
            <person name="Hu W."/>
            <person name="Zhang Y."/>
            <person name="Tian X."/>
            <person name="Jiao Y."/>
            <person name="Liang X."/>
            <person name="Jin J."/>
            <person name="Gao L."/>
            <person name="Zheng W."/>
            <person name="Hao B."/>
            <person name="Liu S.-M."/>
            <person name="Wang W."/>
            <person name="Yuan L."/>
            <person name="Cao M."/>
            <person name="McDermott J."/>
            <person name="Samudrala R."/>
            <person name="Wang J."/>
            <person name="Wong G.K.-S."/>
            <person name="Yang H."/>
        </authorList>
    </citation>
    <scope>NUCLEOTIDE SEQUENCE [LARGE SCALE GENOMIC DNA]</scope>
    <source>
        <strain>cv. Nipponbare</strain>
    </source>
</reference>
<gene>
    <name type="ordered locus">Os07g0515000</name>
    <name type="ordered locus">LOC_Os07g33100</name>
    <name type="ORF">OsJ_24443</name>
    <name type="ORF">P0048D08.111</name>
</gene>
<comment type="function">
    <text evidence="1">S-adenosyl-L-methionine-dependent transferase that acts as a component of the wybutosine biosynthesis pathway. Wybutosine is a hyper modified guanosine with a tricyclic base found at the 3'-position adjacent to the anticodon of eukaryotic phenylalanine tRNA (By similarity).</text>
</comment>
<comment type="catalytic activity">
    <reaction>
        <text>4-demethyl-7-[(3S)-3-amino-3-carboxypropyl]wyosine(37) in tRNA(Phe) + S-adenosyl-L-methionine = 7-[(3S)-3-amino-3-carboxypropyl]wyosine(37) in tRNA(Phe) + S-adenosyl-L-homocysteine + H(+)</text>
        <dbReference type="Rhea" id="RHEA:36635"/>
        <dbReference type="Rhea" id="RHEA-COMP:10378"/>
        <dbReference type="Rhea" id="RHEA-COMP:10379"/>
        <dbReference type="ChEBI" id="CHEBI:15378"/>
        <dbReference type="ChEBI" id="CHEBI:57856"/>
        <dbReference type="ChEBI" id="CHEBI:59789"/>
        <dbReference type="ChEBI" id="CHEBI:73543"/>
        <dbReference type="ChEBI" id="CHEBI:73550"/>
        <dbReference type="EC" id="2.1.1.282"/>
    </reaction>
</comment>
<comment type="catalytic activity">
    <reaction>
        <text>4-demethylwyosine(37) in tRNA(Phe) + S-adenosyl-L-methionine = 4-demethyl-7-[(3S)-3-amino-3-carboxypropyl]wyosine(37) in tRNA(Phe) + S-methyl-5'-thioadenosine + H(+)</text>
        <dbReference type="Rhea" id="RHEA:36355"/>
        <dbReference type="Rhea" id="RHEA-COMP:10164"/>
        <dbReference type="Rhea" id="RHEA-COMP:10378"/>
        <dbReference type="ChEBI" id="CHEBI:15378"/>
        <dbReference type="ChEBI" id="CHEBI:17509"/>
        <dbReference type="ChEBI" id="CHEBI:59789"/>
        <dbReference type="ChEBI" id="CHEBI:64315"/>
        <dbReference type="ChEBI" id="CHEBI:73550"/>
        <dbReference type="EC" id="2.5.1.114"/>
    </reaction>
</comment>
<comment type="pathway">
    <text>tRNA modification; wybutosine-tRNA(Phe) biosynthesis.</text>
</comment>
<comment type="similarity">
    <text evidence="4">In the C-terminal section; belongs to the class I-like SAM-binding methyltransferase superfamily. TRM5/TYW2 family.</text>
</comment>
<comment type="similarity">
    <text evidence="4">In the N-terminal section; belongs to the TYW3 family.</text>
</comment>
<comment type="caution">
    <text evidence="4">In plants, methylation steps 2, 3 and 4 of wybutosine biosynthesis are probably processed by the this multifunctional enzyme, while in other eukaryotes, these steps are mediated by 3 different proteins.</text>
</comment>
<comment type="sequence caution" evidence="4">
    <conflict type="erroneous gene model prediction">
        <sequence resource="EMBL-CDS" id="BAF21688"/>
    </conflict>
</comment>
<comment type="sequence caution" evidence="4">
    <conflict type="erroneous gene model prediction">
        <sequence resource="EMBL-CDS" id="EEE67266"/>
    </conflict>
</comment>
<organism>
    <name type="scientific">Oryza sativa subsp. japonica</name>
    <name type="common">Rice</name>
    <dbReference type="NCBI Taxonomy" id="39947"/>
    <lineage>
        <taxon>Eukaryota</taxon>
        <taxon>Viridiplantae</taxon>
        <taxon>Streptophyta</taxon>
        <taxon>Embryophyta</taxon>
        <taxon>Tracheophyta</taxon>
        <taxon>Spermatophyta</taxon>
        <taxon>Magnoliopsida</taxon>
        <taxon>Liliopsida</taxon>
        <taxon>Poales</taxon>
        <taxon>Poaceae</taxon>
        <taxon>BOP clade</taxon>
        <taxon>Oryzoideae</taxon>
        <taxon>Oryzeae</taxon>
        <taxon>Oryzinae</taxon>
        <taxon>Oryza</taxon>
        <taxon>Oryza sativa</taxon>
    </lineage>
</organism>
<feature type="chain" id="PRO_0000281850" description="tRNA wybutosine-synthesizing protein 2/3/4">
    <location>
        <begin position="1"/>
        <end position="1043"/>
    </location>
</feature>
<feature type="repeat" description="Kelch 1">
    <location>
        <begin position="360"/>
        <end position="410"/>
    </location>
</feature>
<feature type="repeat" description="Kelch 2">
    <location>
        <begin position="412"/>
        <end position="460"/>
    </location>
</feature>
<feature type="repeat" description="Kelch 3">
    <location>
        <begin position="461"/>
        <end position="510"/>
    </location>
</feature>
<feature type="repeat" description="Kelch 4">
    <location>
        <begin position="512"/>
        <end position="559"/>
    </location>
</feature>
<feature type="region of interest" description="tRNA wybutosine-synthesizing protein 3 homolog">
    <location>
        <begin position="1"/>
        <end position="233"/>
    </location>
</feature>
<feature type="region of interest" description="Disordered" evidence="3">
    <location>
        <begin position="53"/>
        <end position="75"/>
    </location>
</feature>
<feature type="region of interest" description="tRNA wybutosine-synthesizing protein 2 homolog">
    <location>
        <begin position="700"/>
        <end position="1041"/>
    </location>
</feature>
<feature type="binding site" evidence="2">
    <location>
        <position position="874"/>
    </location>
    <ligand>
        <name>S-adenosyl-L-methionine</name>
        <dbReference type="ChEBI" id="CHEBI:59789"/>
    </ligand>
</feature>
<feature type="binding site" evidence="2">
    <location>
        <begin position="942"/>
        <end position="943"/>
    </location>
    <ligand>
        <name>S-adenosyl-L-methionine</name>
        <dbReference type="ChEBI" id="CHEBI:59789"/>
    </ligand>
</feature>
<proteinExistence type="evidence at transcript level"/>
<keyword id="KW-0880">Kelch repeat</keyword>
<keyword id="KW-0489">Methyltransferase</keyword>
<keyword id="KW-0511">Multifunctional enzyme</keyword>
<keyword id="KW-1185">Reference proteome</keyword>
<keyword id="KW-0677">Repeat</keyword>
<keyword id="KW-0949">S-adenosyl-L-methionine</keyword>
<keyword id="KW-0808">Transferase</keyword>
<keyword id="KW-0819">tRNA processing</keyword>
<dbReference type="EC" id="2.1.1.282"/>
<dbReference type="EC" id="2.5.1.114"/>
<dbReference type="EMBL" id="AP004269">
    <property type="protein sequence ID" value="BAC20692.1"/>
    <property type="molecule type" value="Genomic_DNA"/>
</dbReference>
<dbReference type="EMBL" id="AP008213">
    <property type="protein sequence ID" value="BAF21688.2"/>
    <property type="status" value="ALT_SEQ"/>
    <property type="molecule type" value="Genomic_DNA"/>
</dbReference>
<dbReference type="EMBL" id="AP014963">
    <property type="status" value="NOT_ANNOTATED_CDS"/>
    <property type="molecule type" value="Genomic_DNA"/>
</dbReference>
<dbReference type="EMBL" id="CM000144">
    <property type="protein sequence ID" value="EEE67266.1"/>
    <property type="status" value="ALT_SEQ"/>
    <property type="molecule type" value="Genomic_DNA"/>
</dbReference>
<dbReference type="SMR" id="Q8H4D4"/>
<dbReference type="FunCoup" id="Q8H4D4">
    <property type="interactions" value="465"/>
</dbReference>
<dbReference type="STRING" id="39947.Q8H4D4"/>
<dbReference type="PaxDb" id="39947-Q8H4D4"/>
<dbReference type="KEGG" id="dosa:Os07g0515000"/>
<dbReference type="HOGENOM" id="CLU_3227457_0_0_1"/>
<dbReference type="InParanoid" id="Q8H4D4"/>
<dbReference type="UniPathway" id="UPA00375"/>
<dbReference type="Proteomes" id="UP000000763">
    <property type="component" value="Chromosome 7"/>
</dbReference>
<dbReference type="Proteomes" id="UP000007752">
    <property type="component" value="Chromosome 7"/>
</dbReference>
<dbReference type="Proteomes" id="UP000059680">
    <property type="component" value="Chromosome 7"/>
</dbReference>
<dbReference type="GO" id="GO:0005737">
    <property type="term" value="C:cytoplasm"/>
    <property type="evidence" value="ECO:0000318"/>
    <property type="project" value="GO_Central"/>
</dbReference>
<dbReference type="GO" id="GO:0102522">
    <property type="term" value="F:tRNA 4-demethylwyosine alpha-amino-alpha-carboxypropyltransferase activity"/>
    <property type="evidence" value="ECO:0007669"/>
    <property type="project" value="UniProtKB-EC"/>
</dbReference>
<dbReference type="GO" id="GO:0008175">
    <property type="term" value="F:tRNA methyltransferase activity"/>
    <property type="evidence" value="ECO:0000318"/>
    <property type="project" value="GO_Central"/>
</dbReference>
<dbReference type="GO" id="GO:0030488">
    <property type="term" value="P:tRNA methylation"/>
    <property type="evidence" value="ECO:0000318"/>
    <property type="project" value="GO_Central"/>
</dbReference>
<dbReference type="GO" id="GO:0031591">
    <property type="term" value="P:wybutosine biosynthetic process"/>
    <property type="evidence" value="ECO:0000318"/>
    <property type="project" value="GO_Central"/>
</dbReference>
<dbReference type="CDD" id="cd02440">
    <property type="entry name" value="AdoMet_MTases"/>
    <property type="match status" value="1"/>
</dbReference>
<dbReference type="FunFam" id="2.120.10.80:FF:000122">
    <property type="entry name" value="tRNA wybutosine-synthesizing protein 2/3/4"/>
    <property type="match status" value="1"/>
</dbReference>
<dbReference type="FunFam" id="2.120.10.80:FF:000146">
    <property type="entry name" value="tRNA wybutosine-synthesizing protein 2/3/4"/>
    <property type="match status" value="1"/>
</dbReference>
<dbReference type="FunFam" id="3.30.1960.10:FF:000002">
    <property type="entry name" value="tRNA wybutosine-synthesizing protein 2/3/4"/>
    <property type="match status" value="1"/>
</dbReference>
<dbReference type="FunFam" id="3.30.300.110:FF:000003">
    <property type="entry name" value="tRNA wybutosine-synthesizing protein 2/3/4"/>
    <property type="match status" value="1"/>
</dbReference>
<dbReference type="FunFam" id="3.40.50.150:FF:000131">
    <property type="entry name" value="tRNA wybutosine-synthesizing protein 2/3/4"/>
    <property type="match status" value="1"/>
</dbReference>
<dbReference type="Gene3D" id="2.120.10.80">
    <property type="entry name" value="Kelch-type beta propeller"/>
    <property type="match status" value="2"/>
</dbReference>
<dbReference type="Gene3D" id="3.30.300.110">
    <property type="entry name" value="Met-10+ protein-like domains"/>
    <property type="match status" value="1"/>
</dbReference>
<dbReference type="Gene3D" id="3.30.1960.10">
    <property type="entry name" value="tRNA wybutosine-synthesizing-like"/>
    <property type="match status" value="1"/>
</dbReference>
<dbReference type="Gene3D" id="3.40.50.150">
    <property type="entry name" value="Vaccinia Virus protein VP39"/>
    <property type="match status" value="1"/>
</dbReference>
<dbReference type="InterPro" id="IPR015915">
    <property type="entry name" value="Kelch-typ_b-propeller"/>
</dbReference>
<dbReference type="InterPro" id="IPR006652">
    <property type="entry name" value="Kelch_1"/>
</dbReference>
<dbReference type="InterPro" id="IPR030382">
    <property type="entry name" value="MeTrfase_TRM5/TYW2"/>
</dbReference>
<dbReference type="InterPro" id="IPR029063">
    <property type="entry name" value="SAM-dependent_MTases_sf"/>
</dbReference>
<dbReference type="InterPro" id="IPR056743">
    <property type="entry name" value="TRM5-TYW2-like_MTfase"/>
</dbReference>
<dbReference type="InterPro" id="IPR056744">
    <property type="entry name" value="TRM5/TYW2-like_N"/>
</dbReference>
<dbReference type="InterPro" id="IPR003827">
    <property type="entry name" value="tRNA_yW-synthesising"/>
</dbReference>
<dbReference type="InterPro" id="IPR036602">
    <property type="entry name" value="tRNA_yW-synthesising-like_sf"/>
</dbReference>
<dbReference type="PANTHER" id="PTHR23245">
    <property type="entry name" value="TRNA METHYLTRANSFERASE"/>
    <property type="match status" value="1"/>
</dbReference>
<dbReference type="PANTHER" id="PTHR23245:SF25">
    <property type="entry name" value="TRNA WYBUTOSINE-SYNTHESIZING PROTEIN 2 HOMOLOG"/>
    <property type="match status" value="1"/>
</dbReference>
<dbReference type="Pfam" id="PF24681">
    <property type="entry name" value="Kelch_KLHDC2_KLHL20_DRC7"/>
    <property type="match status" value="1"/>
</dbReference>
<dbReference type="Pfam" id="PF02475">
    <property type="entry name" value="TRM5-TYW2_MTfase"/>
    <property type="match status" value="1"/>
</dbReference>
<dbReference type="Pfam" id="PF25133">
    <property type="entry name" value="TYW2_N_2"/>
    <property type="match status" value="1"/>
</dbReference>
<dbReference type="Pfam" id="PF02676">
    <property type="entry name" value="TYW3"/>
    <property type="match status" value="1"/>
</dbReference>
<dbReference type="SMART" id="SM00612">
    <property type="entry name" value="Kelch"/>
    <property type="match status" value="2"/>
</dbReference>
<dbReference type="SUPFAM" id="SSF117281">
    <property type="entry name" value="Kelch motif"/>
    <property type="match status" value="1"/>
</dbReference>
<dbReference type="SUPFAM" id="SSF53335">
    <property type="entry name" value="S-adenosyl-L-methionine-dependent methyltransferases"/>
    <property type="match status" value="1"/>
</dbReference>
<dbReference type="SUPFAM" id="SSF111278">
    <property type="entry name" value="SSo0622-like"/>
    <property type="match status" value="1"/>
</dbReference>
<dbReference type="PROSITE" id="PS51684">
    <property type="entry name" value="SAM_MT_TRM5_TYW2"/>
    <property type="match status" value="1"/>
</dbReference>
<evidence type="ECO:0000250" key="1"/>
<evidence type="ECO:0000255" key="2">
    <source>
        <dbReference type="PROSITE-ProRule" id="PRU01021"/>
    </source>
</evidence>
<evidence type="ECO:0000256" key="3">
    <source>
        <dbReference type="SAM" id="MobiDB-lite"/>
    </source>
</evidence>
<evidence type="ECO:0000305" key="4"/>